<protein>
    <recommendedName>
        <fullName>Glutamate dehydrogenase</fullName>
        <shortName>GDH</shortName>
        <ecNumber>1.4.1.3</ecNumber>
    </recommendedName>
</protein>
<organism>
    <name type="scientific">Thermococcus kodakarensis (strain ATCC BAA-918 / JCM 12380 / KOD1)</name>
    <name type="common">Pyrococcus kodakaraensis (strain KOD1)</name>
    <dbReference type="NCBI Taxonomy" id="69014"/>
    <lineage>
        <taxon>Archaea</taxon>
        <taxon>Methanobacteriati</taxon>
        <taxon>Methanobacteriota</taxon>
        <taxon>Thermococci</taxon>
        <taxon>Thermococcales</taxon>
        <taxon>Thermococcaceae</taxon>
        <taxon>Thermococcus</taxon>
    </lineage>
</organism>
<keyword id="KW-0158">Chromosome</keyword>
<keyword id="KW-0963">Cytoplasm</keyword>
<keyword id="KW-0903">Direct protein sequencing</keyword>
<keyword id="KW-0520">NAD</keyword>
<keyword id="KW-0521">NADP</keyword>
<keyword id="KW-0560">Oxidoreductase</keyword>
<keyword id="KW-1185">Reference proteome</keyword>
<accession>O59650</accession>
<accession>Q5JDK3</accession>
<feature type="initiator methionine" description="Removed" evidence="4">
    <location>
        <position position="1"/>
    </location>
</feature>
<feature type="chain" id="PRO_0000182759" description="Glutamate dehydrogenase">
    <location>
        <begin position="2"/>
        <end position="421"/>
    </location>
</feature>
<feature type="active site" evidence="2">
    <location>
        <position position="105"/>
    </location>
</feature>
<feature type="binding site" evidence="1">
    <location>
        <begin position="220"/>
        <end position="226"/>
    </location>
    <ligand>
        <name>NAD(+)</name>
        <dbReference type="ChEBI" id="CHEBI:57540"/>
    </ligand>
</feature>
<feature type="sequence conflict" description="In Ref. 1; BAA25261." evidence="5" ref="1">
    <original>W</original>
    <variation>C</variation>
    <location>
        <position position="138"/>
    </location>
</feature>
<feature type="sequence conflict" description="In Ref. 1; BAA25261." evidence="5" ref="1">
    <original>A</original>
    <variation>T</variation>
    <location>
        <position position="347"/>
    </location>
</feature>
<evidence type="ECO:0000255" key="1"/>
<evidence type="ECO:0000255" key="2">
    <source>
        <dbReference type="PROSITE-ProRule" id="PRU10011"/>
    </source>
</evidence>
<evidence type="ECO:0000269" key="3">
    <source>
    </source>
</evidence>
<evidence type="ECO:0000269" key="4">
    <source>
    </source>
</evidence>
<evidence type="ECO:0000305" key="5"/>
<evidence type="ECO:0000305" key="6">
    <source>
    </source>
</evidence>
<dbReference type="EC" id="1.4.1.3"/>
<dbReference type="EMBL" id="D89911">
    <property type="protein sequence ID" value="BAA25261.1"/>
    <property type="molecule type" value="Genomic_DNA"/>
</dbReference>
<dbReference type="EMBL" id="AP006878">
    <property type="protein sequence ID" value="BAD85620.1"/>
    <property type="molecule type" value="Genomic_DNA"/>
</dbReference>
<dbReference type="PIR" id="T44789">
    <property type="entry name" value="T44789"/>
</dbReference>
<dbReference type="RefSeq" id="WP_011250382.1">
    <property type="nucleotide sequence ID" value="NC_006624.1"/>
</dbReference>
<dbReference type="SMR" id="O59650"/>
<dbReference type="STRING" id="69014.TK1431"/>
<dbReference type="EnsemblBacteria" id="BAD85620">
    <property type="protein sequence ID" value="BAD85620"/>
    <property type="gene ID" value="TK1431"/>
</dbReference>
<dbReference type="GeneID" id="78447955"/>
<dbReference type="KEGG" id="tko:TK1431"/>
<dbReference type="PATRIC" id="fig|69014.16.peg.1392"/>
<dbReference type="eggNOG" id="arCOG01352">
    <property type="taxonomic scope" value="Archaea"/>
</dbReference>
<dbReference type="HOGENOM" id="CLU_025763_1_2_2"/>
<dbReference type="InParanoid" id="O59650"/>
<dbReference type="OrthoDB" id="6425at2157"/>
<dbReference type="PhylomeDB" id="O59650"/>
<dbReference type="BRENDA" id="1.4.1.3">
    <property type="organism ID" value="5246"/>
</dbReference>
<dbReference type="SABIO-RK" id="O59650"/>
<dbReference type="Proteomes" id="UP000000536">
    <property type="component" value="Chromosome"/>
</dbReference>
<dbReference type="GO" id="GO:0005694">
    <property type="term" value="C:chromosome"/>
    <property type="evidence" value="ECO:0007669"/>
    <property type="project" value="UniProtKB-SubCell"/>
</dbReference>
<dbReference type="GO" id="GO:0005737">
    <property type="term" value="C:cytoplasm"/>
    <property type="evidence" value="ECO:0007669"/>
    <property type="project" value="UniProtKB-SubCell"/>
</dbReference>
<dbReference type="GO" id="GO:0004352">
    <property type="term" value="F:glutamate dehydrogenase (NAD+) activity"/>
    <property type="evidence" value="ECO:0000318"/>
    <property type="project" value="GO_Central"/>
</dbReference>
<dbReference type="GO" id="GO:0004354">
    <property type="term" value="F:glutamate dehydrogenase (NADP+) activity"/>
    <property type="evidence" value="ECO:0007669"/>
    <property type="project" value="RHEA"/>
</dbReference>
<dbReference type="GO" id="GO:0006538">
    <property type="term" value="P:glutamate catabolic process"/>
    <property type="evidence" value="ECO:0000318"/>
    <property type="project" value="GO_Central"/>
</dbReference>
<dbReference type="CDD" id="cd01076">
    <property type="entry name" value="NAD_bind_1_Glu_DH"/>
    <property type="match status" value="1"/>
</dbReference>
<dbReference type="FunFam" id="3.40.50.10860:FF:000003">
    <property type="entry name" value="Glutamate dehydrogenase"/>
    <property type="match status" value="1"/>
</dbReference>
<dbReference type="Gene3D" id="3.40.50.10860">
    <property type="entry name" value="Leucine Dehydrogenase, chain A, domain 1"/>
    <property type="match status" value="1"/>
</dbReference>
<dbReference type="Gene3D" id="3.40.50.720">
    <property type="entry name" value="NAD(P)-binding Rossmann-like Domain"/>
    <property type="match status" value="1"/>
</dbReference>
<dbReference type="InterPro" id="IPR046346">
    <property type="entry name" value="Aminoacid_DH-like_N_sf"/>
</dbReference>
<dbReference type="InterPro" id="IPR053388">
    <property type="entry name" value="GLPV_dehydrogenases"/>
</dbReference>
<dbReference type="InterPro" id="IPR006095">
    <property type="entry name" value="Glu/Leu/Phe/Val/Trp_DH"/>
</dbReference>
<dbReference type="InterPro" id="IPR006096">
    <property type="entry name" value="Glu/Leu/Phe/Val/Trp_DH_C"/>
</dbReference>
<dbReference type="InterPro" id="IPR006097">
    <property type="entry name" value="Glu/Leu/Phe/Val/Trp_DH_dimer"/>
</dbReference>
<dbReference type="InterPro" id="IPR033524">
    <property type="entry name" value="Glu/Leu/Phe/Val_DH_AS"/>
</dbReference>
<dbReference type="InterPro" id="IPR014362">
    <property type="entry name" value="Glu_DH"/>
</dbReference>
<dbReference type="InterPro" id="IPR036291">
    <property type="entry name" value="NAD(P)-bd_dom_sf"/>
</dbReference>
<dbReference type="InterPro" id="IPR033922">
    <property type="entry name" value="NAD_bind_Glu_DH"/>
</dbReference>
<dbReference type="NCBIfam" id="NF040817">
    <property type="entry name" value="GdhA_Arch"/>
    <property type="match status" value="1"/>
</dbReference>
<dbReference type="PANTHER" id="PTHR11606">
    <property type="entry name" value="GLUTAMATE DEHYDROGENASE"/>
    <property type="match status" value="1"/>
</dbReference>
<dbReference type="PANTHER" id="PTHR11606:SF13">
    <property type="entry name" value="GLUTAMATE DEHYDROGENASE 1, MITOCHONDRIAL"/>
    <property type="match status" value="1"/>
</dbReference>
<dbReference type="Pfam" id="PF00208">
    <property type="entry name" value="ELFV_dehydrog"/>
    <property type="match status" value="1"/>
</dbReference>
<dbReference type="Pfam" id="PF02812">
    <property type="entry name" value="ELFV_dehydrog_N"/>
    <property type="match status" value="1"/>
</dbReference>
<dbReference type="PIRSF" id="PIRSF000185">
    <property type="entry name" value="Glu_DH"/>
    <property type="match status" value="1"/>
</dbReference>
<dbReference type="PRINTS" id="PR00082">
    <property type="entry name" value="GLFDHDRGNASE"/>
</dbReference>
<dbReference type="SMART" id="SM00839">
    <property type="entry name" value="ELFV_dehydrog"/>
    <property type="match status" value="1"/>
</dbReference>
<dbReference type="SUPFAM" id="SSF53223">
    <property type="entry name" value="Aminoacid dehydrogenase-like, N-terminal domain"/>
    <property type="match status" value="1"/>
</dbReference>
<dbReference type="SUPFAM" id="SSF51735">
    <property type="entry name" value="NAD(P)-binding Rossmann-fold domains"/>
    <property type="match status" value="1"/>
</dbReference>
<dbReference type="PROSITE" id="PS00074">
    <property type="entry name" value="GLFV_DEHYDROGENASE"/>
    <property type="match status" value="1"/>
</dbReference>
<reference key="1">
    <citation type="journal article" date="1998" name="Mol. Gen. Genet.">
        <title>Sequence analysis of glutamate dehydrogenase (GDH) from the hyperthermophilic archaeon Pyrococcus sp. KOD1 and comparison of the enzymatic characteristics of native and recombinant GDHs.</title>
        <authorList>
            <person name="Rahman R.N.Z.A."/>
            <person name="Fujiwara S."/>
            <person name="Takagi M."/>
            <person name="Imanaka T."/>
        </authorList>
    </citation>
    <scope>NUCLEOTIDE SEQUENCE [GENOMIC DNA]</scope>
    <scope>PROTEIN SEQUENCE OF 2-11</scope>
    <source>
        <strain>ATCC BAA-918 / JCM 12380 / KOD1</strain>
    </source>
</reference>
<reference key="2">
    <citation type="journal article" date="2005" name="Genome Res.">
        <title>Complete genome sequence of the hyperthermophilic archaeon Thermococcus kodakaraensis KOD1 and comparison with Pyrococcus genomes.</title>
        <authorList>
            <person name="Fukui T."/>
            <person name="Atomi H."/>
            <person name="Kanai T."/>
            <person name="Matsumi R."/>
            <person name="Fujiwara S."/>
            <person name="Imanaka T."/>
        </authorList>
    </citation>
    <scope>NUCLEOTIDE SEQUENCE [LARGE SCALE GENOMIC DNA]</scope>
    <source>
        <strain>ATCC BAA-918 / JCM 12380 / KOD1</strain>
    </source>
</reference>
<reference key="3">
    <citation type="journal article" date="2011" name="Mol. Biol. Cell">
        <title>Histone and TK0471/TrmBL2 form a novel heterogeneous genome architecture in the hyperthermophilic archaeon Thermococcus kodakarensis.</title>
        <authorList>
            <person name="Maruyama H."/>
            <person name="Shin M."/>
            <person name="Oda T."/>
            <person name="Matsumi R."/>
            <person name="Ohniwa R.L."/>
            <person name="Itoh T."/>
            <person name="Shirahige K."/>
            <person name="Imanaka T."/>
            <person name="Atomi H."/>
            <person name="Yoshimura S.H."/>
            <person name="Takeyasu K."/>
        </authorList>
    </citation>
    <scope>IDENTIFICATION BY MASS SPECTROMETRY</scope>
    <scope>SUBCELLULAR LOCATION</scope>
    <source>
        <strain>ATCC BAA-918 / JCM 12380 / KOD1</strain>
    </source>
</reference>
<name>DHE3_THEKO</name>
<proteinExistence type="evidence at protein level"/>
<gene>
    <name type="primary">gdhA</name>
    <name type="ordered locus">TK1431</name>
</gene>
<comment type="catalytic activity">
    <reaction evidence="2">
        <text>L-glutamate + NAD(+) + H2O = 2-oxoglutarate + NH4(+) + NADH + H(+)</text>
        <dbReference type="Rhea" id="RHEA:15133"/>
        <dbReference type="ChEBI" id="CHEBI:15377"/>
        <dbReference type="ChEBI" id="CHEBI:15378"/>
        <dbReference type="ChEBI" id="CHEBI:16810"/>
        <dbReference type="ChEBI" id="CHEBI:28938"/>
        <dbReference type="ChEBI" id="CHEBI:29985"/>
        <dbReference type="ChEBI" id="CHEBI:57540"/>
        <dbReference type="ChEBI" id="CHEBI:57945"/>
        <dbReference type="EC" id="1.4.1.3"/>
    </reaction>
</comment>
<comment type="catalytic activity">
    <reaction evidence="2">
        <text>L-glutamate + NADP(+) + H2O = 2-oxoglutarate + NH4(+) + NADPH + H(+)</text>
        <dbReference type="Rhea" id="RHEA:11612"/>
        <dbReference type="ChEBI" id="CHEBI:15377"/>
        <dbReference type="ChEBI" id="CHEBI:15378"/>
        <dbReference type="ChEBI" id="CHEBI:16810"/>
        <dbReference type="ChEBI" id="CHEBI:28938"/>
        <dbReference type="ChEBI" id="CHEBI:29985"/>
        <dbReference type="ChEBI" id="CHEBI:57783"/>
        <dbReference type="ChEBI" id="CHEBI:58349"/>
        <dbReference type="EC" id="1.4.1.3"/>
    </reaction>
</comment>
<comment type="subunit">
    <text>Homohexamer.</text>
</comment>
<comment type="subcellular location">
    <subcellularLocation>
        <location evidence="6">Cytoplasm</location>
    </subcellularLocation>
    <subcellularLocation>
        <location evidence="3">Chromosome</location>
    </subcellularLocation>
</comment>
<comment type="miscellaneous">
    <text>Uses both NAD and NADP.</text>
</comment>
<comment type="similarity">
    <text evidence="5">Belongs to the Glu/Leu/Phe/Val dehydrogenases family.</text>
</comment>
<sequence length="421" mass="47056">MVEIDPFEMAVQQLERAAQFMDISEEALEWLKRPMRIVEVSVPVEMDDGSVKVFTGFRVQHNWARGPTKGGIRWHPAETLSTVKALATWMTWKVAVVDLPYGGGKGGIIVDPKKLSEREQERLARSYIRAVYDVIGPWTDIPAPDVYTNPKIMAWMMDEYETIMRRKGPAFGVITGKPPGVGGIVARMDATARGAAFTIREAAKALGWDDLKGKTIAIQGYGNAGYYLHKIMSEEFGMKVVAVSDSKGGIYNPDGLPPADEVLKWKKEHGSVKDMPGTQNITNEELLELEVDILAPSAIEGVITKENADNVKAKIVAEVANGPVTPEADEILHEKGILQIPDFLCNAGGVTVSYFEWVQNINGFYWTVEETRKRLDDKMTKAFWDVFNTHKEKNIHMRDAAYVVAVSRVYEAMKHRGWVKK</sequence>